<gene>
    <name evidence="1" type="primary">SPB4</name>
    <name type="ordered locus">DEHA2D07744g</name>
</gene>
<dbReference type="EC" id="3.6.4.13" evidence="1"/>
<dbReference type="EMBL" id="CR382136">
    <property type="protein sequence ID" value="CAG86941.1"/>
    <property type="molecule type" value="Genomic_DNA"/>
</dbReference>
<dbReference type="RefSeq" id="XP_458797.1">
    <property type="nucleotide sequence ID" value="XM_458797.1"/>
</dbReference>
<dbReference type="SMR" id="Q6BSM3"/>
<dbReference type="FunCoup" id="Q6BSM3">
    <property type="interactions" value="1248"/>
</dbReference>
<dbReference type="STRING" id="284592.Q6BSM3"/>
<dbReference type="GeneID" id="2901449"/>
<dbReference type="KEGG" id="dha:DEHA2D07744g"/>
<dbReference type="VEuPathDB" id="FungiDB:DEHA2D07744g"/>
<dbReference type="eggNOG" id="KOG0345">
    <property type="taxonomic scope" value="Eukaryota"/>
</dbReference>
<dbReference type="HOGENOM" id="CLU_003041_26_4_1"/>
<dbReference type="InParanoid" id="Q6BSM3"/>
<dbReference type="OMA" id="AYKEHEC"/>
<dbReference type="OrthoDB" id="7396459at2759"/>
<dbReference type="Proteomes" id="UP000000599">
    <property type="component" value="Chromosome D"/>
</dbReference>
<dbReference type="GO" id="GO:0030686">
    <property type="term" value="C:90S preribosome"/>
    <property type="evidence" value="ECO:0007669"/>
    <property type="project" value="EnsemblFungi"/>
</dbReference>
<dbReference type="GO" id="GO:0005730">
    <property type="term" value="C:nucleolus"/>
    <property type="evidence" value="ECO:0007669"/>
    <property type="project" value="UniProtKB-SubCell"/>
</dbReference>
<dbReference type="GO" id="GO:0005654">
    <property type="term" value="C:nucleoplasm"/>
    <property type="evidence" value="ECO:0007669"/>
    <property type="project" value="EnsemblFungi"/>
</dbReference>
<dbReference type="GO" id="GO:0030687">
    <property type="term" value="C:preribosome, large subunit precursor"/>
    <property type="evidence" value="ECO:0007669"/>
    <property type="project" value="EnsemblFungi"/>
</dbReference>
<dbReference type="GO" id="GO:0005524">
    <property type="term" value="F:ATP binding"/>
    <property type="evidence" value="ECO:0007669"/>
    <property type="project" value="UniProtKB-KW"/>
</dbReference>
<dbReference type="GO" id="GO:0016887">
    <property type="term" value="F:ATP hydrolysis activity"/>
    <property type="evidence" value="ECO:0007669"/>
    <property type="project" value="RHEA"/>
</dbReference>
<dbReference type="GO" id="GO:0003723">
    <property type="term" value="F:RNA binding"/>
    <property type="evidence" value="ECO:0007669"/>
    <property type="project" value="UniProtKB-KW"/>
</dbReference>
<dbReference type="GO" id="GO:0003724">
    <property type="term" value="F:RNA helicase activity"/>
    <property type="evidence" value="ECO:0007669"/>
    <property type="project" value="UniProtKB-EC"/>
</dbReference>
<dbReference type="GO" id="GO:1902626">
    <property type="term" value="P:assembly of large subunit precursor of preribosome"/>
    <property type="evidence" value="ECO:0007669"/>
    <property type="project" value="EnsemblFungi"/>
</dbReference>
<dbReference type="GO" id="GO:0000470">
    <property type="term" value="P:maturation of LSU-rRNA"/>
    <property type="evidence" value="ECO:0007669"/>
    <property type="project" value="EnsemblFungi"/>
</dbReference>
<dbReference type="CDD" id="cd17960">
    <property type="entry name" value="DEADc_DDX55"/>
    <property type="match status" value="1"/>
</dbReference>
<dbReference type="CDD" id="cd18787">
    <property type="entry name" value="SF2_C_DEAD"/>
    <property type="match status" value="1"/>
</dbReference>
<dbReference type="Gene3D" id="3.40.50.300">
    <property type="entry name" value="P-loop containing nucleotide triphosphate hydrolases"/>
    <property type="match status" value="2"/>
</dbReference>
<dbReference type="InterPro" id="IPR056330">
    <property type="entry name" value="CTT_SPB4"/>
</dbReference>
<dbReference type="InterPro" id="IPR011545">
    <property type="entry name" value="DEAD/DEAH_box_helicase_dom"/>
</dbReference>
<dbReference type="InterPro" id="IPR014001">
    <property type="entry name" value="Helicase_ATP-bd"/>
</dbReference>
<dbReference type="InterPro" id="IPR001650">
    <property type="entry name" value="Helicase_C-like"/>
</dbReference>
<dbReference type="InterPro" id="IPR027417">
    <property type="entry name" value="P-loop_NTPase"/>
</dbReference>
<dbReference type="InterPro" id="IPR000629">
    <property type="entry name" value="RNA-helicase_DEAD-box_CS"/>
</dbReference>
<dbReference type="InterPro" id="IPR014014">
    <property type="entry name" value="RNA_helicase_DEAD_Q_motif"/>
</dbReference>
<dbReference type="InterPro" id="IPR025313">
    <property type="entry name" value="SPB4-like_CTE"/>
</dbReference>
<dbReference type="PANTHER" id="PTHR24031">
    <property type="entry name" value="RNA HELICASE"/>
    <property type="match status" value="1"/>
</dbReference>
<dbReference type="Pfam" id="PF13959">
    <property type="entry name" value="CTE_SPB4"/>
    <property type="match status" value="1"/>
</dbReference>
<dbReference type="Pfam" id="PF23681">
    <property type="entry name" value="CTT_SPB4"/>
    <property type="match status" value="1"/>
</dbReference>
<dbReference type="Pfam" id="PF00270">
    <property type="entry name" value="DEAD"/>
    <property type="match status" value="1"/>
</dbReference>
<dbReference type="Pfam" id="PF00271">
    <property type="entry name" value="Helicase_C"/>
    <property type="match status" value="1"/>
</dbReference>
<dbReference type="SMART" id="SM00487">
    <property type="entry name" value="DEXDc"/>
    <property type="match status" value="1"/>
</dbReference>
<dbReference type="SMART" id="SM01178">
    <property type="entry name" value="DUF4217"/>
    <property type="match status" value="1"/>
</dbReference>
<dbReference type="SMART" id="SM00490">
    <property type="entry name" value="HELICc"/>
    <property type="match status" value="1"/>
</dbReference>
<dbReference type="SUPFAM" id="SSF52540">
    <property type="entry name" value="P-loop containing nucleoside triphosphate hydrolases"/>
    <property type="match status" value="1"/>
</dbReference>
<dbReference type="PROSITE" id="PS00039">
    <property type="entry name" value="DEAD_ATP_HELICASE"/>
    <property type="match status" value="1"/>
</dbReference>
<dbReference type="PROSITE" id="PS51192">
    <property type="entry name" value="HELICASE_ATP_BIND_1"/>
    <property type="match status" value="1"/>
</dbReference>
<dbReference type="PROSITE" id="PS51194">
    <property type="entry name" value="HELICASE_CTER"/>
    <property type="match status" value="1"/>
</dbReference>
<dbReference type="PROSITE" id="PS51195">
    <property type="entry name" value="Q_MOTIF"/>
    <property type="match status" value="1"/>
</dbReference>
<evidence type="ECO:0000250" key="1">
    <source>
        <dbReference type="UniProtKB" id="P25808"/>
    </source>
</evidence>
<evidence type="ECO:0000255" key="2"/>
<evidence type="ECO:0000255" key="3">
    <source>
        <dbReference type="PROSITE-ProRule" id="PRU00541"/>
    </source>
</evidence>
<evidence type="ECO:0000255" key="4">
    <source>
        <dbReference type="PROSITE-ProRule" id="PRU00542"/>
    </source>
</evidence>
<evidence type="ECO:0000256" key="5">
    <source>
        <dbReference type="SAM" id="MobiDB-lite"/>
    </source>
</evidence>
<evidence type="ECO:0000305" key="6"/>
<protein>
    <recommendedName>
        <fullName evidence="6">ATP-dependent rRNA helicase SPB4</fullName>
        <ecNumber evidence="1">3.6.4.13</ecNumber>
    </recommendedName>
</protein>
<feature type="chain" id="PRO_0000232327" description="ATP-dependent rRNA helicase SPB4">
    <location>
        <begin position="1"/>
        <end position="614"/>
    </location>
</feature>
<feature type="domain" description="Helicase ATP-binding" evidence="3">
    <location>
        <begin position="41"/>
        <end position="233"/>
    </location>
</feature>
<feature type="domain" description="Helicase C-terminal" evidence="4">
    <location>
        <begin position="260"/>
        <end position="431"/>
    </location>
</feature>
<feature type="region of interest" description="Disordered" evidence="5">
    <location>
        <begin position="514"/>
        <end position="614"/>
    </location>
</feature>
<feature type="coiled-coil region" evidence="2">
    <location>
        <begin position="510"/>
        <end position="581"/>
    </location>
</feature>
<feature type="short sequence motif" description="Q motif" evidence="6">
    <location>
        <begin position="10"/>
        <end position="38"/>
    </location>
</feature>
<feature type="short sequence motif" description="DEAD box" evidence="6">
    <location>
        <begin position="181"/>
        <end position="184"/>
    </location>
</feature>
<feature type="compositionally biased region" description="Basic and acidic residues" evidence="5">
    <location>
        <begin position="514"/>
        <end position="529"/>
    </location>
</feature>
<feature type="compositionally biased region" description="Basic residues" evidence="5">
    <location>
        <begin position="530"/>
        <end position="541"/>
    </location>
</feature>
<feature type="compositionally biased region" description="Basic and acidic residues" evidence="5">
    <location>
        <begin position="551"/>
        <end position="563"/>
    </location>
</feature>
<feature type="compositionally biased region" description="Basic and acidic residues" evidence="5">
    <location>
        <begin position="584"/>
        <end position="595"/>
    </location>
</feature>
<feature type="compositionally biased region" description="Polar residues" evidence="5">
    <location>
        <begin position="604"/>
        <end position="614"/>
    </location>
</feature>
<feature type="binding site" evidence="3">
    <location>
        <begin position="54"/>
        <end position="61"/>
    </location>
    <ligand>
        <name>ATP</name>
        <dbReference type="ChEBI" id="CHEBI:30616"/>
    </ligand>
</feature>
<proteinExistence type="inferred from homology"/>
<accession>Q6BSM3</accession>
<comment type="function">
    <text evidence="1">ATP-binding RNA helicase involved in the biogenesis of 60S ribosomal subunits. Binds 90S pre-ribosomal particles and dissociates from pre-60S ribosomal particles after processing of 27SB pre-rRNA. Required for the normal formation of 18S rRNA through the processing of pre-rRNAs at sites A0, A1 and A2, and the normal formation of 25S and 5.8S rRNAs through the processing of pre-rRNAs at sites C1 and C2.</text>
</comment>
<comment type="catalytic activity">
    <reaction evidence="1">
        <text>ATP + H2O = ADP + phosphate + H(+)</text>
        <dbReference type="Rhea" id="RHEA:13065"/>
        <dbReference type="ChEBI" id="CHEBI:15377"/>
        <dbReference type="ChEBI" id="CHEBI:15378"/>
        <dbReference type="ChEBI" id="CHEBI:30616"/>
        <dbReference type="ChEBI" id="CHEBI:43474"/>
        <dbReference type="ChEBI" id="CHEBI:456216"/>
        <dbReference type="EC" id="3.6.4.13"/>
    </reaction>
</comment>
<comment type="subunit">
    <text evidence="1">Component of pre-60S ribosomal complexes.</text>
</comment>
<comment type="subcellular location">
    <subcellularLocation>
        <location evidence="1">Nucleus</location>
        <location evidence="1">Nucleolus</location>
    </subcellularLocation>
</comment>
<comment type="domain">
    <text>The Q motif is unique to and characteristic of the DEAD box family of RNA helicases and controls ATP binding and hydrolysis.</text>
</comment>
<comment type="similarity">
    <text evidence="6">Belongs to the DEAD box helicase family. DDX55/SPB4 subfamily.</text>
</comment>
<name>SPB4_DEBHA</name>
<sequence>METREGSLTWSVLKCDLHPWIKEAIKSLGYPTMTPVQASTIPLFSGNKDVVVEAVTGSGKTLAFVIPVLQKLSNRLYNIDEEGENPEPVKKGHMLSIILSPTRELAKQIQTVFDKVLEYIPEDKATIKTQLLVGSLSSVREDIDYFLTNKTHILIATPGRLLDFLSSNYVKTNSVEIAVLDEADKLLDISFERDVIKILKQLPKQRRTGLFSATISSAGDTIFRTGMANPVKIVVKSKNSKNAAPTSLNVSYMHVEPETKISALIALIKDYRFQKCIVYFPTCTSVKHFYSVFQTLVNVEEEDRYKFFSLHGQLSTKPRLKTLQNFSEGDSMLHKHVLLTTDVAARGIDIPDVDLVIQLDPPTDPDVFFHRSGRTGRANKVGQAIVMLNNNSREEDYVNFMEVKGMTMSNMECPNISKIHDKFQKKFRKYMLEDRARHELAIKSYVGFVRYYSKHMASSIFRLQTLDYVGLGKMYGLLRLPKMPESRYIPNEEMPEDGWLGDVIDMDKYEYADKQKEESRKKNLEEDKARKVHDAKKRKELKVKNEAWSSKTDKIETKQERREKMKRKREAIEKQLMDDSSSDEETKVDWKEMVKTNKKKKTPSDSMQGSFDDL</sequence>
<keyword id="KW-0067">ATP-binding</keyword>
<keyword id="KW-0175">Coiled coil</keyword>
<keyword id="KW-0347">Helicase</keyword>
<keyword id="KW-0378">Hydrolase</keyword>
<keyword id="KW-0547">Nucleotide-binding</keyword>
<keyword id="KW-0539">Nucleus</keyword>
<keyword id="KW-1185">Reference proteome</keyword>
<keyword id="KW-0690">Ribosome biogenesis</keyword>
<keyword id="KW-0694">RNA-binding</keyword>
<keyword id="KW-0698">rRNA processing</keyword>
<organism>
    <name type="scientific">Debaryomyces hansenii (strain ATCC 36239 / CBS 767 / BCRC 21394 / JCM 1990 / NBRC 0083 / IGC 2968)</name>
    <name type="common">Yeast</name>
    <name type="synonym">Torulaspora hansenii</name>
    <dbReference type="NCBI Taxonomy" id="284592"/>
    <lineage>
        <taxon>Eukaryota</taxon>
        <taxon>Fungi</taxon>
        <taxon>Dikarya</taxon>
        <taxon>Ascomycota</taxon>
        <taxon>Saccharomycotina</taxon>
        <taxon>Pichiomycetes</taxon>
        <taxon>Debaryomycetaceae</taxon>
        <taxon>Debaryomyces</taxon>
    </lineage>
</organism>
<reference key="1">
    <citation type="journal article" date="2004" name="Nature">
        <title>Genome evolution in yeasts.</title>
        <authorList>
            <person name="Dujon B."/>
            <person name="Sherman D."/>
            <person name="Fischer G."/>
            <person name="Durrens P."/>
            <person name="Casaregola S."/>
            <person name="Lafontaine I."/>
            <person name="de Montigny J."/>
            <person name="Marck C."/>
            <person name="Neuveglise C."/>
            <person name="Talla E."/>
            <person name="Goffard N."/>
            <person name="Frangeul L."/>
            <person name="Aigle M."/>
            <person name="Anthouard V."/>
            <person name="Babour A."/>
            <person name="Barbe V."/>
            <person name="Barnay S."/>
            <person name="Blanchin S."/>
            <person name="Beckerich J.-M."/>
            <person name="Beyne E."/>
            <person name="Bleykasten C."/>
            <person name="Boisrame A."/>
            <person name="Boyer J."/>
            <person name="Cattolico L."/>
            <person name="Confanioleri F."/>
            <person name="de Daruvar A."/>
            <person name="Despons L."/>
            <person name="Fabre E."/>
            <person name="Fairhead C."/>
            <person name="Ferry-Dumazet H."/>
            <person name="Groppi A."/>
            <person name="Hantraye F."/>
            <person name="Hennequin C."/>
            <person name="Jauniaux N."/>
            <person name="Joyet P."/>
            <person name="Kachouri R."/>
            <person name="Kerrest A."/>
            <person name="Koszul R."/>
            <person name="Lemaire M."/>
            <person name="Lesur I."/>
            <person name="Ma L."/>
            <person name="Muller H."/>
            <person name="Nicaud J.-M."/>
            <person name="Nikolski M."/>
            <person name="Oztas S."/>
            <person name="Ozier-Kalogeropoulos O."/>
            <person name="Pellenz S."/>
            <person name="Potier S."/>
            <person name="Richard G.-F."/>
            <person name="Straub M.-L."/>
            <person name="Suleau A."/>
            <person name="Swennen D."/>
            <person name="Tekaia F."/>
            <person name="Wesolowski-Louvel M."/>
            <person name="Westhof E."/>
            <person name="Wirth B."/>
            <person name="Zeniou-Meyer M."/>
            <person name="Zivanovic Y."/>
            <person name="Bolotin-Fukuhara M."/>
            <person name="Thierry A."/>
            <person name="Bouchier C."/>
            <person name="Caudron B."/>
            <person name="Scarpelli C."/>
            <person name="Gaillardin C."/>
            <person name="Weissenbach J."/>
            <person name="Wincker P."/>
            <person name="Souciet J.-L."/>
        </authorList>
    </citation>
    <scope>NUCLEOTIDE SEQUENCE [LARGE SCALE GENOMIC DNA]</scope>
    <source>
        <strain>ATCC 36239 / CBS 767 / BCRC 21394 / JCM 1990 / NBRC 0083 / IGC 2968</strain>
    </source>
</reference>